<reference key="1">
    <citation type="journal article" date="2003" name="Proc. Natl. Acad. Sci. U.S.A.">
        <title>The complete genome sequence of Mycobacterium bovis.</title>
        <authorList>
            <person name="Garnier T."/>
            <person name="Eiglmeier K."/>
            <person name="Camus J.-C."/>
            <person name="Medina N."/>
            <person name="Mansoor H."/>
            <person name="Pryor M."/>
            <person name="Duthoy S."/>
            <person name="Grondin S."/>
            <person name="Lacroix C."/>
            <person name="Monsempe C."/>
            <person name="Simon S."/>
            <person name="Harris B."/>
            <person name="Atkin R."/>
            <person name="Doggett J."/>
            <person name="Mayes R."/>
            <person name="Keating L."/>
            <person name="Wheeler P.R."/>
            <person name="Parkhill J."/>
            <person name="Barrell B.G."/>
            <person name="Cole S.T."/>
            <person name="Gordon S.V."/>
            <person name="Hewinson R.G."/>
        </authorList>
    </citation>
    <scope>NUCLEOTIDE SEQUENCE [LARGE SCALE GENOMIC DNA]</scope>
    <source>
        <strain>ATCC BAA-935 / AF2122/97</strain>
    </source>
</reference>
<reference key="2">
    <citation type="journal article" date="2017" name="Genome Announc.">
        <title>Updated reference genome sequence and annotation of Mycobacterium bovis AF2122/97.</title>
        <authorList>
            <person name="Malone K.M."/>
            <person name="Farrell D."/>
            <person name="Stuber T.P."/>
            <person name="Schubert O.T."/>
            <person name="Aebersold R."/>
            <person name="Robbe-Austerman S."/>
            <person name="Gordon S.V."/>
        </authorList>
    </citation>
    <scope>NUCLEOTIDE SEQUENCE [LARGE SCALE GENOMIC DNA]</scope>
    <scope>GENOME REANNOTATION</scope>
    <source>
        <strain>ATCC BAA-935 / AF2122/97</strain>
    </source>
</reference>
<gene>
    <name evidence="1" type="primary">sucC</name>
    <name type="ordered locus">BQ2027_MB0976</name>
</gene>
<feature type="chain" id="PRO_0000102838" description="Succinate--CoA ligase [ADP-forming] subunit beta">
    <location>
        <begin position="1"/>
        <end position="387"/>
    </location>
</feature>
<feature type="domain" description="ATP-grasp" evidence="1">
    <location>
        <begin position="9"/>
        <end position="236"/>
    </location>
</feature>
<feature type="binding site" evidence="1">
    <location>
        <position position="45"/>
    </location>
    <ligand>
        <name>ATP</name>
        <dbReference type="ChEBI" id="CHEBI:30616"/>
    </ligand>
</feature>
<feature type="binding site" evidence="1">
    <location>
        <begin position="52"/>
        <end position="54"/>
    </location>
    <ligand>
        <name>ATP</name>
        <dbReference type="ChEBI" id="CHEBI:30616"/>
    </ligand>
</feature>
<feature type="binding site" evidence="1">
    <location>
        <position position="94"/>
    </location>
    <ligand>
        <name>ATP</name>
        <dbReference type="ChEBI" id="CHEBI:30616"/>
    </ligand>
</feature>
<feature type="binding site" evidence="1">
    <location>
        <position position="99"/>
    </location>
    <ligand>
        <name>ATP</name>
        <dbReference type="ChEBI" id="CHEBI:30616"/>
    </ligand>
</feature>
<feature type="binding site" evidence="1">
    <location>
        <position position="191"/>
    </location>
    <ligand>
        <name>Mg(2+)</name>
        <dbReference type="ChEBI" id="CHEBI:18420"/>
    </ligand>
</feature>
<feature type="binding site" evidence="1">
    <location>
        <position position="205"/>
    </location>
    <ligand>
        <name>Mg(2+)</name>
        <dbReference type="ChEBI" id="CHEBI:18420"/>
    </ligand>
</feature>
<feature type="binding site" evidence="1">
    <location>
        <position position="256"/>
    </location>
    <ligand>
        <name>substrate</name>
        <note>ligand shared with subunit alpha</note>
    </ligand>
</feature>
<feature type="binding site" evidence="1">
    <location>
        <begin position="318"/>
        <end position="320"/>
    </location>
    <ligand>
        <name>substrate</name>
        <note>ligand shared with subunit alpha</note>
    </ligand>
</feature>
<sequence>MDLFEYQAKELFAKHNVPSTPGRVTDTAEGAKAIATEIGRPVMVKAQVKIGGRGKAGGVKYAATPQDAYEHAKNILGLDIKGHIVKKLLVAEASDIAEEYYLSFLLDRANRTYLAMCSVEGGMEIEEVAATKPERLAKVPVNAVKGVDLDFARSIAEQGHLPAEVLDTAAVTIAKLWELFVAEDATLVEVNPLVRTPDHKILALDAKITLDGNADFRQPGHAEFEDRAATDPLELKAKEHDLNYVKLDGQVGIIGNGAGLAMSTLDVVAYAGEKHGGVKPANFLDIGGGASAEVMAAGLDVVLGDQQVKSVFVNVFGGITSCDAVATGIVKALGMLGDEANKPLVVRLDGNNVEEGRRILTEANHPLVTLVATMDEAADKAAELASA</sequence>
<comment type="function">
    <text evidence="1">Succinyl-CoA synthetase functions in the citric acid cycle (TCA), coupling the hydrolysis of succinyl-CoA to the synthesis of either ATP or GTP and thus represents the only step of substrate-level phosphorylation in the TCA. The beta subunit provides nucleotide specificity of the enzyme and binds the substrate succinate, while the binding sites for coenzyme A and phosphate are found in the alpha subunit.</text>
</comment>
<comment type="catalytic activity">
    <reaction evidence="1">
        <text>succinate + ATP + CoA = succinyl-CoA + ADP + phosphate</text>
        <dbReference type="Rhea" id="RHEA:17661"/>
        <dbReference type="ChEBI" id="CHEBI:30031"/>
        <dbReference type="ChEBI" id="CHEBI:30616"/>
        <dbReference type="ChEBI" id="CHEBI:43474"/>
        <dbReference type="ChEBI" id="CHEBI:57287"/>
        <dbReference type="ChEBI" id="CHEBI:57292"/>
        <dbReference type="ChEBI" id="CHEBI:456216"/>
        <dbReference type="EC" id="6.2.1.5"/>
    </reaction>
    <physiologicalReaction direction="right-to-left" evidence="1">
        <dbReference type="Rhea" id="RHEA:17663"/>
    </physiologicalReaction>
</comment>
<comment type="catalytic activity">
    <reaction evidence="1">
        <text>GTP + succinate + CoA = succinyl-CoA + GDP + phosphate</text>
        <dbReference type="Rhea" id="RHEA:22120"/>
        <dbReference type="ChEBI" id="CHEBI:30031"/>
        <dbReference type="ChEBI" id="CHEBI:37565"/>
        <dbReference type="ChEBI" id="CHEBI:43474"/>
        <dbReference type="ChEBI" id="CHEBI:57287"/>
        <dbReference type="ChEBI" id="CHEBI:57292"/>
        <dbReference type="ChEBI" id="CHEBI:58189"/>
    </reaction>
    <physiologicalReaction direction="right-to-left" evidence="1">
        <dbReference type="Rhea" id="RHEA:22122"/>
    </physiologicalReaction>
</comment>
<comment type="cofactor">
    <cofactor evidence="1">
        <name>Mg(2+)</name>
        <dbReference type="ChEBI" id="CHEBI:18420"/>
    </cofactor>
    <text evidence="1">Binds 1 Mg(2+) ion per subunit.</text>
</comment>
<comment type="pathway">
    <text evidence="1">Carbohydrate metabolism; tricarboxylic acid cycle; succinate from succinyl-CoA (ligase route): step 1/1.</text>
</comment>
<comment type="subunit">
    <text evidence="1">Heterotetramer of two alpha and two beta subunits.</text>
</comment>
<comment type="similarity">
    <text evidence="1">Belongs to the succinate/malate CoA ligase beta subunit family.</text>
</comment>
<evidence type="ECO:0000255" key="1">
    <source>
        <dbReference type="HAMAP-Rule" id="MF_00558"/>
    </source>
</evidence>
<dbReference type="EC" id="6.2.1.5" evidence="1"/>
<dbReference type="EMBL" id="LT708304">
    <property type="protein sequence ID" value="SIT99574.1"/>
    <property type="molecule type" value="Genomic_DNA"/>
</dbReference>
<dbReference type="RefSeq" id="NP_854633.1">
    <property type="nucleotide sequence ID" value="NC_002945.3"/>
</dbReference>
<dbReference type="RefSeq" id="WP_003404866.1">
    <property type="nucleotide sequence ID" value="NC_002945.4"/>
</dbReference>
<dbReference type="SMR" id="Q7U0Z1"/>
<dbReference type="KEGG" id="mbo:BQ2027_MB0976"/>
<dbReference type="PATRIC" id="fig|233413.5.peg.1063"/>
<dbReference type="UniPathway" id="UPA00223">
    <property type="reaction ID" value="UER00999"/>
</dbReference>
<dbReference type="Proteomes" id="UP000001419">
    <property type="component" value="Chromosome"/>
</dbReference>
<dbReference type="GO" id="GO:0005829">
    <property type="term" value="C:cytosol"/>
    <property type="evidence" value="ECO:0007669"/>
    <property type="project" value="TreeGrafter"/>
</dbReference>
<dbReference type="GO" id="GO:0042709">
    <property type="term" value="C:succinate-CoA ligase complex"/>
    <property type="evidence" value="ECO:0007669"/>
    <property type="project" value="TreeGrafter"/>
</dbReference>
<dbReference type="GO" id="GO:0005524">
    <property type="term" value="F:ATP binding"/>
    <property type="evidence" value="ECO:0007669"/>
    <property type="project" value="UniProtKB-UniRule"/>
</dbReference>
<dbReference type="GO" id="GO:0000287">
    <property type="term" value="F:magnesium ion binding"/>
    <property type="evidence" value="ECO:0007669"/>
    <property type="project" value="UniProtKB-UniRule"/>
</dbReference>
<dbReference type="GO" id="GO:0004775">
    <property type="term" value="F:succinate-CoA ligase (ADP-forming) activity"/>
    <property type="evidence" value="ECO:0007669"/>
    <property type="project" value="UniProtKB-UniRule"/>
</dbReference>
<dbReference type="GO" id="GO:0004776">
    <property type="term" value="F:succinate-CoA ligase (GDP-forming) activity"/>
    <property type="evidence" value="ECO:0007669"/>
    <property type="project" value="RHEA"/>
</dbReference>
<dbReference type="GO" id="GO:0006104">
    <property type="term" value="P:succinyl-CoA metabolic process"/>
    <property type="evidence" value="ECO:0007669"/>
    <property type="project" value="TreeGrafter"/>
</dbReference>
<dbReference type="GO" id="GO:0006099">
    <property type="term" value="P:tricarboxylic acid cycle"/>
    <property type="evidence" value="ECO:0007669"/>
    <property type="project" value="UniProtKB-UniRule"/>
</dbReference>
<dbReference type="FunFam" id="3.30.1490.20:FF:000014">
    <property type="entry name" value="Succinate--CoA ligase [ADP-forming] subunit beta"/>
    <property type="match status" value="1"/>
</dbReference>
<dbReference type="FunFam" id="3.30.470.20:FF:000002">
    <property type="entry name" value="Succinate--CoA ligase [ADP-forming] subunit beta"/>
    <property type="match status" value="1"/>
</dbReference>
<dbReference type="FunFam" id="3.40.50.261:FF:000007">
    <property type="entry name" value="Succinate--CoA ligase [ADP-forming] subunit beta"/>
    <property type="match status" value="1"/>
</dbReference>
<dbReference type="Gene3D" id="3.30.1490.20">
    <property type="entry name" value="ATP-grasp fold, A domain"/>
    <property type="match status" value="1"/>
</dbReference>
<dbReference type="Gene3D" id="3.30.470.20">
    <property type="entry name" value="ATP-grasp fold, B domain"/>
    <property type="match status" value="1"/>
</dbReference>
<dbReference type="Gene3D" id="3.40.50.261">
    <property type="entry name" value="Succinyl-CoA synthetase domains"/>
    <property type="match status" value="1"/>
</dbReference>
<dbReference type="HAMAP" id="MF_00558">
    <property type="entry name" value="Succ_CoA_beta"/>
    <property type="match status" value="1"/>
</dbReference>
<dbReference type="InterPro" id="IPR011761">
    <property type="entry name" value="ATP-grasp"/>
</dbReference>
<dbReference type="InterPro" id="IPR013650">
    <property type="entry name" value="ATP-grasp_succ-CoA_synth-type"/>
</dbReference>
<dbReference type="InterPro" id="IPR013815">
    <property type="entry name" value="ATP_grasp_subdomain_1"/>
</dbReference>
<dbReference type="InterPro" id="IPR017866">
    <property type="entry name" value="Succ-CoA_synthase_bsu_CS"/>
</dbReference>
<dbReference type="InterPro" id="IPR005811">
    <property type="entry name" value="SUCC_ACL_C"/>
</dbReference>
<dbReference type="InterPro" id="IPR005809">
    <property type="entry name" value="Succ_CoA_ligase-like_bsu"/>
</dbReference>
<dbReference type="InterPro" id="IPR016102">
    <property type="entry name" value="Succinyl-CoA_synth-like"/>
</dbReference>
<dbReference type="NCBIfam" id="NF001913">
    <property type="entry name" value="PRK00696.1"/>
    <property type="match status" value="1"/>
</dbReference>
<dbReference type="NCBIfam" id="TIGR01016">
    <property type="entry name" value="sucCoAbeta"/>
    <property type="match status" value="1"/>
</dbReference>
<dbReference type="PANTHER" id="PTHR11815:SF10">
    <property type="entry name" value="SUCCINATE--COA LIGASE [GDP-FORMING] SUBUNIT BETA, MITOCHONDRIAL"/>
    <property type="match status" value="1"/>
</dbReference>
<dbReference type="PANTHER" id="PTHR11815">
    <property type="entry name" value="SUCCINYL-COA SYNTHETASE BETA CHAIN"/>
    <property type="match status" value="1"/>
</dbReference>
<dbReference type="Pfam" id="PF08442">
    <property type="entry name" value="ATP-grasp_2"/>
    <property type="match status" value="1"/>
</dbReference>
<dbReference type="Pfam" id="PF00549">
    <property type="entry name" value="Ligase_CoA"/>
    <property type="match status" value="1"/>
</dbReference>
<dbReference type="PIRSF" id="PIRSF001554">
    <property type="entry name" value="SucCS_beta"/>
    <property type="match status" value="1"/>
</dbReference>
<dbReference type="SUPFAM" id="SSF56059">
    <property type="entry name" value="Glutathione synthetase ATP-binding domain-like"/>
    <property type="match status" value="1"/>
</dbReference>
<dbReference type="SUPFAM" id="SSF52210">
    <property type="entry name" value="Succinyl-CoA synthetase domains"/>
    <property type="match status" value="1"/>
</dbReference>
<dbReference type="PROSITE" id="PS50975">
    <property type="entry name" value="ATP_GRASP"/>
    <property type="match status" value="1"/>
</dbReference>
<dbReference type="PROSITE" id="PS01217">
    <property type="entry name" value="SUCCINYL_COA_LIG_3"/>
    <property type="match status" value="1"/>
</dbReference>
<name>SUCC_MYCBO</name>
<keyword id="KW-0067">ATP-binding</keyword>
<keyword id="KW-0436">Ligase</keyword>
<keyword id="KW-0460">Magnesium</keyword>
<keyword id="KW-0479">Metal-binding</keyword>
<keyword id="KW-0547">Nucleotide-binding</keyword>
<keyword id="KW-1185">Reference proteome</keyword>
<keyword id="KW-0816">Tricarboxylic acid cycle</keyword>
<protein>
    <recommendedName>
        <fullName evidence="1">Succinate--CoA ligase [ADP-forming] subunit beta</fullName>
        <ecNumber evidence="1">6.2.1.5</ecNumber>
    </recommendedName>
    <alternativeName>
        <fullName evidence="1">Succinyl-CoA synthetase subunit beta</fullName>
        <shortName evidence="1">SCS-beta</shortName>
    </alternativeName>
</protein>
<accession>Q7U0Z1</accession>
<accession>A0A1R3XWY7</accession>
<accession>X2BGN9</accession>
<organism>
    <name type="scientific">Mycobacterium bovis (strain ATCC BAA-935 / AF2122/97)</name>
    <dbReference type="NCBI Taxonomy" id="233413"/>
    <lineage>
        <taxon>Bacteria</taxon>
        <taxon>Bacillati</taxon>
        <taxon>Actinomycetota</taxon>
        <taxon>Actinomycetes</taxon>
        <taxon>Mycobacteriales</taxon>
        <taxon>Mycobacteriaceae</taxon>
        <taxon>Mycobacterium</taxon>
        <taxon>Mycobacterium tuberculosis complex</taxon>
    </lineage>
</organism>
<proteinExistence type="inferred from homology"/>